<gene>
    <name evidence="1" type="primary">mutS</name>
    <name type="ordered locus">XOO1642</name>
</gene>
<feature type="chain" id="PRO_0000224419" description="DNA mismatch repair protein MutS">
    <location>
        <begin position="1"/>
        <end position="873"/>
    </location>
</feature>
<feature type="binding site" evidence="1">
    <location>
        <begin position="625"/>
        <end position="632"/>
    </location>
    <ligand>
        <name>ATP</name>
        <dbReference type="ChEBI" id="CHEBI:30616"/>
    </ligand>
</feature>
<proteinExistence type="inferred from homology"/>
<keyword id="KW-0067">ATP-binding</keyword>
<keyword id="KW-0227">DNA damage</keyword>
<keyword id="KW-0234">DNA repair</keyword>
<keyword id="KW-0238">DNA-binding</keyword>
<keyword id="KW-0547">Nucleotide-binding</keyword>
<keyword id="KW-1185">Reference proteome</keyword>
<dbReference type="EMBL" id="AE013598">
    <property type="protein sequence ID" value="AAW74896.1"/>
    <property type="molecule type" value="Genomic_DNA"/>
</dbReference>
<dbReference type="SMR" id="Q5H2C5"/>
<dbReference type="STRING" id="291331.XOO1642"/>
<dbReference type="KEGG" id="xoo:XOO1642"/>
<dbReference type="HOGENOM" id="CLU_002472_4_0_6"/>
<dbReference type="Proteomes" id="UP000006735">
    <property type="component" value="Chromosome"/>
</dbReference>
<dbReference type="GO" id="GO:0005829">
    <property type="term" value="C:cytosol"/>
    <property type="evidence" value="ECO:0007669"/>
    <property type="project" value="TreeGrafter"/>
</dbReference>
<dbReference type="GO" id="GO:0005524">
    <property type="term" value="F:ATP binding"/>
    <property type="evidence" value="ECO:0007669"/>
    <property type="project" value="UniProtKB-UniRule"/>
</dbReference>
<dbReference type="GO" id="GO:0140664">
    <property type="term" value="F:ATP-dependent DNA damage sensor activity"/>
    <property type="evidence" value="ECO:0007669"/>
    <property type="project" value="InterPro"/>
</dbReference>
<dbReference type="GO" id="GO:0003684">
    <property type="term" value="F:damaged DNA binding"/>
    <property type="evidence" value="ECO:0007669"/>
    <property type="project" value="UniProtKB-UniRule"/>
</dbReference>
<dbReference type="GO" id="GO:0030983">
    <property type="term" value="F:mismatched DNA binding"/>
    <property type="evidence" value="ECO:0007669"/>
    <property type="project" value="InterPro"/>
</dbReference>
<dbReference type="GO" id="GO:0006298">
    <property type="term" value="P:mismatch repair"/>
    <property type="evidence" value="ECO:0007669"/>
    <property type="project" value="UniProtKB-UniRule"/>
</dbReference>
<dbReference type="CDD" id="cd03284">
    <property type="entry name" value="ABC_MutS1"/>
    <property type="match status" value="1"/>
</dbReference>
<dbReference type="FunFam" id="1.10.1420.10:FF:000018">
    <property type="entry name" value="DNA mismatch repair protein MutS"/>
    <property type="match status" value="1"/>
</dbReference>
<dbReference type="FunFam" id="3.40.1170.10:FF:000001">
    <property type="entry name" value="DNA mismatch repair protein MutS"/>
    <property type="match status" value="1"/>
</dbReference>
<dbReference type="FunFam" id="3.40.50.300:FF:000283">
    <property type="entry name" value="DNA mismatch repair protein MutS"/>
    <property type="match status" value="1"/>
</dbReference>
<dbReference type="Gene3D" id="1.10.1420.10">
    <property type="match status" value="2"/>
</dbReference>
<dbReference type="Gene3D" id="6.10.140.430">
    <property type="match status" value="1"/>
</dbReference>
<dbReference type="Gene3D" id="3.40.1170.10">
    <property type="entry name" value="DNA repair protein MutS, domain I"/>
    <property type="match status" value="1"/>
</dbReference>
<dbReference type="Gene3D" id="3.30.420.110">
    <property type="entry name" value="MutS, connector domain"/>
    <property type="match status" value="1"/>
</dbReference>
<dbReference type="Gene3D" id="3.40.50.300">
    <property type="entry name" value="P-loop containing nucleotide triphosphate hydrolases"/>
    <property type="match status" value="1"/>
</dbReference>
<dbReference type="HAMAP" id="MF_00096">
    <property type="entry name" value="MutS"/>
    <property type="match status" value="1"/>
</dbReference>
<dbReference type="InterPro" id="IPR005748">
    <property type="entry name" value="DNA_mismatch_repair_MutS"/>
</dbReference>
<dbReference type="InterPro" id="IPR007695">
    <property type="entry name" value="DNA_mismatch_repair_MutS-lik_N"/>
</dbReference>
<dbReference type="InterPro" id="IPR017261">
    <property type="entry name" value="DNA_mismatch_repair_MutS/MSH"/>
</dbReference>
<dbReference type="InterPro" id="IPR000432">
    <property type="entry name" value="DNA_mismatch_repair_MutS_C"/>
</dbReference>
<dbReference type="InterPro" id="IPR007861">
    <property type="entry name" value="DNA_mismatch_repair_MutS_clamp"/>
</dbReference>
<dbReference type="InterPro" id="IPR007696">
    <property type="entry name" value="DNA_mismatch_repair_MutS_core"/>
</dbReference>
<dbReference type="InterPro" id="IPR016151">
    <property type="entry name" value="DNA_mismatch_repair_MutS_N"/>
</dbReference>
<dbReference type="InterPro" id="IPR036187">
    <property type="entry name" value="DNA_mismatch_repair_MutS_sf"/>
</dbReference>
<dbReference type="InterPro" id="IPR007860">
    <property type="entry name" value="DNA_mmatch_repair_MutS_con_dom"/>
</dbReference>
<dbReference type="InterPro" id="IPR045076">
    <property type="entry name" value="MutS"/>
</dbReference>
<dbReference type="InterPro" id="IPR036678">
    <property type="entry name" value="MutS_con_dom_sf"/>
</dbReference>
<dbReference type="InterPro" id="IPR027417">
    <property type="entry name" value="P-loop_NTPase"/>
</dbReference>
<dbReference type="NCBIfam" id="TIGR01070">
    <property type="entry name" value="mutS1"/>
    <property type="match status" value="1"/>
</dbReference>
<dbReference type="NCBIfam" id="NF003810">
    <property type="entry name" value="PRK05399.1"/>
    <property type="match status" value="1"/>
</dbReference>
<dbReference type="PANTHER" id="PTHR11361:SF34">
    <property type="entry name" value="DNA MISMATCH REPAIR PROTEIN MSH1, MITOCHONDRIAL"/>
    <property type="match status" value="1"/>
</dbReference>
<dbReference type="PANTHER" id="PTHR11361">
    <property type="entry name" value="DNA MISMATCH REPAIR PROTEIN MUTS FAMILY MEMBER"/>
    <property type="match status" value="1"/>
</dbReference>
<dbReference type="Pfam" id="PF01624">
    <property type="entry name" value="MutS_I"/>
    <property type="match status" value="1"/>
</dbReference>
<dbReference type="Pfam" id="PF05188">
    <property type="entry name" value="MutS_II"/>
    <property type="match status" value="1"/>
</dbReference>
<dbReference type="Pfam" id="PF05192">
    <property type="entry name" value="MutS_III"/>
    <property type="match status" value="1"/>
</dbReference>
<dbReference type="Pfam" id="PF05190">
    <property type="entry name" value="MutS_IV"/>
    <property type="match status" value="1"/>
</dbReference>
<dbReference type="Pfam" id="PF00488">
    <property type="entry name" value="MutS_V"/>
    <property type="match status" value="1"/>
</dbReference>
<dbReference type="PIRSF" id="PIRSF037677">
    <property type="entry name" value="DNA_mis_repair_Msh6"/>
    <property type="match status" value="1"/>
</dbReference>
<dbReference type="SMART" id="SM00534">
    <property type="entry name" value="MUTSac"/>
    <property type="match status" value="1"/>
</dbReference>
<dbReference type="SMART" id="SM00533">
    <property type="entry name" value="MUTSd"/>
    <property type="match status" value="1"/>
</dbReference>
<dbReference type="SUPFAM" id="SSF55271">
    <property type="entry name" value="DNA repair protein MutS, domain I"/>
    <property type="match status" value="1"/>
</dbReference>
<dbReference type="SUPFAM" id="SSF53150">
    <property type="entry name" value="DNA repair protein MutS, domain II"/>
    <property type="match status" value="1"/>
</dbReference>
<dbReference type="SUPFAM" id="SSF48334">
    <property type="entry name" value="DNA repair protein MutS, domain III"/>
    <property type="match status" value="1"/>
</dbReference>
<dbReference type="SUPFAM" id="SSF52540">
    <property type="entry name" value="P-loop containing nucleoside triphosphate hydrolases"/>
    <property type="match status" value="1"/>
</dbReference>
<dbReference type="PROSITE" id="PS00486">
    <property type="entry name" value="DNA_MISMATCH_REPAIR_2"/>
    <property type="match status" value="1"/>
</dbReference>
<name>MUTS_XANOR</name>
<reference key="1">
    <citation type="journal article" date="2005" name="Nucleic Acids Res.">
        <title>The genome sequence of Xanthomonas oryzae pathovar oryzae KACC10331, the bacterial blight pathogen of rice.</title>
        <authorList>
            <person name="Lee B.-M."/>
            <person name="Park Y.-J."/>
            <person name="Park D.-S."/>
            <person name="Kang H.-W."/>
            <person name="Kim J.-G."/>
            <person name="Song E.-S."/>
            <person name="Park I.-C."/>
            <person name="Yoon U.-H."/>
            <person name="Hahn J.-H."/>
            <person name="Koo B.-S."/>
            <person name="Lee G.-B."/>
            <person name="Kim H."/>
            <person name="Park H.-S."/>
            <person name="Yoon K.-O."/>
            <person name="Kim J.-H."/>
            <person name="Jung C.-H."/>
            <person name="Koh N.-H."/>
            <person name="Seo J.-S."/>
            <person name="Go S.-J."/>
        </authorList>
    </citation>
    <scope>NUCLEOTIDE SEQUENCE [LARGE SCALE GENOMIC DNA]</scope>
    <source>
        <strain>KACC10331 / KXO85</strain>
    </source>
</reference>
<comment type="function">
    <text evidence="1">This protein is involved in the repair of mismatches in DNA. It is possible that it carries out the mismatch recognition step. This protein has a weak ATPase activity.</text>
</comment>
<comment type="similarity">
    <text evidence="1">Belongs to the DNA mismatch repair MutS family.</text>
</comment>
<organism>
    <name type="scientific">Xanthomonas oryzae pv. oryzae (strain KACC10331 / KXO85)</name>
    <dbReference type="NCBI Taxonomy" id="291331"/>
    <lineage>
        <taxon>Bacteria</taxon>
        <taxon>Pseudomonadati</taxon>
        <taxon>Pseudomonadota</taxon>
        <taxon>Gammaproteobacteria</taxon>
        <taxon>Lysobacterales</taxon>
        <taxon>Lysobacteraceae</taxon>
        <taxon>Xanthomonas</taxon>
    </lineage>
</organism>
<protein>
    <recommendedName>
        <fullName evidence="1">DNA mismatch repair protein MutS</fullName>
    </recommendedName>
</protein>
<sequence>MQTTDFNTKASSPKSTAEHTPLMKQFFAAKSDYPDLLLFFRMGDFYELFYDDARKAARLLDITLTQRGSSGGAPIPMAGVPVHAYEGYLARLVALGESVAICEQIGDPALAKGLVERKVVRIVTPGTVTDEALLDERRDTLLMAISRSKQGYGLAWADLAGGRFLVNEVDTVDALEAEIARLEPAELLVPDEDHWPEFLRGRIGVRRRPPWLFDADSGRRQLLAFFKLHDLSGFGIDDKPSATAAAGALLGYVEETQKQRLPHLTSIATEVASEAISMNAATRRHLELDTRVDGDTRNTLLGVLDSTVTPMGGRLLRRWLHRPLRLRDVLVQRHHAVGNLIDAGADADLREAFRALGDLERILTRVALRSARPRDFSTLRDGLALLPKVRTILAPLDSPRLQTLHAELGEHDATAHLLISAVAETPPLKLSDGGVIASGYDAELDELRRLSTNADQFLIDLEQRERASSGIATLKVGYNRVHGYYIEISKGQAEKAPLHYSRRQTLTNAERYITEELKTFEDKVLSARERSLSREKLLYEGLLDTLGTELEGLKRCAGALSELDVLAGFAERAQALDWSQPELDSAPCLRIERGRHPVVEAVRDHPFEPNDLDLHSDRRMLVITGPNMGGKSTYMRQNALIVLLAHIGSYVPASRAVIGPIDRILTRIGAGDDLARGQSTFMVEMAETSYILHHATPQSLVLMDEIGRGTSTYDGLALADAVARHLAHTNRCYTLFATHYFELTALADESHDGGASGIANVHLDAVEHGERLVFMHAVKDGPANRSFGLQVAALAGLPKAAVTQARRRLVELEQRGGESHSAQMAPTALDAPQQFGLFTAPSSAAQEALQALDPDELTPKQALEALYRLKALL</sequence>
<accession>Q5H2C5</accession>
<evidence type="ECO:0000255" key="1">
    <source>
        <dbReference type="HAMAP-Rule" id="MF_00096"/>
    </source>
</evidence>